<gene>
    <name type="primary">cpo</name>
    <name type="synonym">cpoL</name>
</gene>
<protein>
    <recommendedName>
        <fullName>Non-heme chloroperoxidase</fullName>
        <ecNumber>1.11.1.-</ecNumber>
    </recommendedName>
    <alternativeName>
        <fullName>Chloride peroxidase</fullName>
    </alternativeName>
    <alternativeName>
        <fullName>Chloroperoxidase L</fullName>
        <shortName>CPO-L</shortName>
    </alternativeName>
</protein>
<dbReference type="EC" id="1.11.1.-"/>
<dbReference type="EMBL" id="U02635">
    <property type="protein sequence ID" value="AAA18642.1"/>
    <property type="molecule type" value="Unassigned_DNA"/>
</dbReference>
<dbReference type="PIR" id="A55211">
    <property type="entry name" value="A55211"/>
</dbReference>
<dbReference type="PDB" id="1A88">
    <property type="method" value="X-ray"/>
    <property type="resolution" value="1.90 A"/>
    <property type="chains" value="A/B/C=2-276"/>
</dbReference>
<dbReference type="PDBsum" id="1A88"/>
<dbReference type="SMR" id="P49323"/>
<dbReference type="ESTHER" id="strli-cpoL">
    <property type="family name" value="Haloperoxidase"/>
</dbReference>
<dbReference type="MEROPS" id="S33.992"/>
<dbReference type="PeroxiBase" id="5557">
    <property type="entry name" value="SliHalNPrx"/>
</dbReference>
<dbReference type="EvolutionaryTrace" id="P49323"/>
<dbReference type="GO" id="GO:0016691">
    <property type="term" value="F:chloride peroxidase activity"/>
    <property type="evidence" value="ECO:0007669"/>
    <property type="project" value="UniProtKB-EC"/>
</dbReference>
<dbReference type="FunFam" id="3.40.50.1820:FF:000205">
    <property type="entry name" value="Non-haem bromoperoxidase BPO-A2"/>
    <property type="match status" value="1"/>
</dbReference>
<dbReference type="Gene3D" id="3.40.50.1820">
    <property type="entry name" value="alpha/beta hydrolase"/>
    <property type="match status" value="1"/>
</dbReference>
<dbReference type="InterPro" id="IPR050471">
    <property type="entry name" value="AB_hydrolase"/>
</dbReference>
<dbReference type="InterPro" id="IPR000073">
    <property type="entry name" value="AB_hydrolase_1"/>
</dbReference>
<dbReference type="InterPro" id="IPR029058">
    <property type="entry name" value="AB_hydrolase_fold"/>
</dbReference>
<dbReference type="InterPro" id="IPR000639">
    <property type="entry name" value="Epox_hydrolase-like"/>
</dbReference>
<dbReference type="PANTHER" id="PTHR43433">
    <property type="entry name" value="HYDROLASE, ALPHA/BETA FOLD FAMILY PROTEIN"/>
    <property type="match status" value="1"/>
</dbReference>
<dbReference type="PANTHER" id="PTHR43433:SF3">
    <property type="entry name" value="NON-HEME CHLOROPEROXIDASE"/>
    <property type="match status" value="1"/>
</dbReference>
<dbReference type="Pfam" id="PF00561">
    <property type="entry name" value="Abhydrolase_1"/>
    <property type="match status" value="1"/>
</dbReference>
<dbReference type="PRINTS" id="PR00111">
    <property type="entry name" value="ABHYDROLASE"/>
</dbReference>
<dbReference type="PRINTS" id="PR00412">
    <property type="entry name" value="EPOXHYDRLASE"/>
</dbReference>
<dbReference type="SUPFAM" id="SSF53474">
    <property type="entry name" value="alpha/beta-Hydrolases"/>
    <property type="match status" value="1"/>
</dbReference>
<evidence type="ECO:0000250" key="1">
    <source>
        <dbReference type="UniProtKB" id="P22862"/>
    </source>
</evidence>
<evidence type="ECO:0000255" key="2"/>
<evidence type="ECO:0000269" key="3">
    <source>
    </source>
</evidence>
<evidence type="ECO:0000305" key="4"/>
<evidence type="ECO:0007829" key="5">
    <source>
        <dbReference type="PDB" id="1A88"/>
    </source>
</evidence>
<organism>
    <name type="scientific">Streptomyces lividans</name>
    <dbReference type="NCBI Taxonomy" id="1916"/>
    <lineage>
        <taxon>Bacteria</taxon>
        <taxon>Bacillati</taxon>
        <taxon>Actinomycetota</taxon>
        <taxon>Actinomycetes</taxon>
        <taxon>Kitasatosporales</taxon>
        <taxon>Streptomycetaceae</taxon>
        <taxon>Streptomyces</taxon>
    </lineage>
</organism>
<feature type="initiator methionine" description="Removed" evidence="3">
    <location>
        <position position="1"/>
    </location>
</feature>
<feature type="chain" id="PRO_0000207063" description="Non-heme chloroperoxidase">
    <location>
        <begin position="2"/>
        <end position="276"/>
    </location>
</feature>
<feature type="domain" description="AB hydrolase-1" evidence="2">
    <location>
        <begin position="24"/>
        <end position="254"/>
    </location>
</feature>
<feature type="active site" evidence="1">
    <location>
        <position position="97"/>
    </location>
</feature>
<feature type="active site" evidence="1">
    <location>
        <position position="227"/>
    </location>
</feature>
<feature type="active site" evidence="1">
    <location>
        <position position="256"/>
    </location>
</feature>
<feature type="strand" evidence="5">
    <location>
        <begin position="3"/>
        <end position="5"/>
    </location>
</feature>
<feature type="strand" evidence="5">
    <location>
        <begin position="11"/>
        <end position="18"/>
    </location>
</feature>
<feature type="strand" evidence="5">
    <location>
        <begin position="24"/>
        <end position="28"/>
    </location>
</feature>
<feature type="helix" evidence="5">
    <location>
        <begin position="35"/>
        <end position="38"/>
    </location>
</feature>
<feature type="helix" evidence="5">
    <location>
        <begin position="39"/>
        <end position="47"/>
    </location>
</feature>
<feature type="strand" evidence="5">
    <location>
        <begin position="51"/>
        <end position="55"/>
    </location>
</feature>
<feature type="helix" evidence="5">
    <location>
        <begin position="72"/>
        <end position="86"/>
    </location>
</feature>
<feature type="strand" evidence="5">
    <location>
        <begin position="90"/>
        <end position="96"/>
    </location>
</feature>
<feature type="helix" evidence="5">
    <location>
        <begin position="99"/>
        <end position="109"/>
    </location>
</feature>
<feature type="strand" evidence="5">
    <location>
        <begin position="114"/>
        <end position="122"/>
    </location>
</feature>
<feature type="helix" evidence="5">
    <location>
        <begin position="140"/>
        <end position="152"/>
    </location>
</feature>
<feature type="helix" evidence="5">
    <location>
        <begin position="154"/>
        <end position="163"/>
    </location>
</feature>
<feature type="turn" evidence="5">
    <location>
        <begin position="164"/>
        <end position="170"/>
    </location>
</feature>
<feature type="helix" evidence="5">
    <location>
        <begin position="178"/>
        <end position="190"/>
    </location>
</feature>
<feature type="helix" evidence="5">
    <location>
        <begin position="193"/>
        <end position="205"/>
    </location>
</feature>
<feature type="helix" evidence="5">
    <location>
        <begin position="209"/>
        <end position="214"/>
    </location>
</feature>
<feature type="strand" evidence="5">
    <location>
        <begin position="219"/>
        <end position="224"/>
    </location>
</feature>
<feature type="strand" evidence="5">
    <location>
        <begin position="228"/>
        <end position="230"/>
    </location>
</feature>
<feature type="turn" evidence="5">
    <location>
        <begin position="233"/>
        <end position="235"/>
    </location>
</feature>
<feature type="helix" evidence="5">
    <location>
        <begin position="236"/>
        <end position="242"/>
    </location>
</feature>
<feature type="strand" evidence="5">
    <location>
        <begin position="246"/>
        <end position="251"/>
    </location>
</feature>
<feature type="helix" evidence="5">
    <location>
        <begin position="258"/>
        <end position="261"/>
    </location>
</feature>
<feature type="helix" evidence="5">
    <location>
        <begin position="263"/>
        <end position="275"/>
    </location>
</feature>
<accession>P49323</accession>
<proteinExistence type="evidence at protein level"/>
<keyword id="KW-0002">3D-structure</keyword>
<keyword id="KW-0868">Chloride</keyword>
<keyword id="KW-0903">Direct protein sequencing</keyword>
<keyword id="KW-0560">Oxidoreductase</keyword>
<keyword id="KW-0575">Peroxidase</keyword>
<comment type="subunit">
    <text>Homodimer.</text>
</comment>
<comment type="similarity">
    <text evidence="4">Belongs to the AB hydrolase superfamily. Bacterial non-heme haloperoxidase / perhydrolase family.</text>
</comment>
<reference key="1">
    <citation type="journal article" date="1994" name="J. Bacteriol.">
        <title>Chloroperoxidase from Streptomyces lividans: isolation and characterization of the enzyme and the corresponding gene.</title>
        <authorList>
            <person name="Bantleon R."/>
            <person name="Altenbuchner J."/>
            <person name="van Pee K.-H."/>
        </authorList>
    </citation>
    <scope>NUCLEOTIDE SEQUENCE [GENOMIC DNA]</scope>
    <scope>PROTEIN SEQUENCE OF 2-21</scope>
    <source>
        <strain>TK64</strain>
    </source>
</reference>
<reference key="2">
    <citation type="journal article" date="1998" name="J. Mol. Biol.">
        <title>Structural investigation of the cofactor-free chloroperoxidases.</title>
        <authorList>
            <person name="Hofmann B."/>
            <person name="Tolzer S."/>
            <person name="Pelletier I."/>
            <person name="Altenbuchner J."/>
            <person name="van Pee K.-H."/>
            <person name="Hecht H.-J."/>
        </authorList>
    </citation>
    <scope>X-RAY CRYSTALLOGRAPHY (1.9 ANGSTROMS)</scope>
    <source>
        <strain>TK64</strain>
    </source>
</reference>
<sequence>MGTVTTSDGTNIFYKDWGPRDGLPVVFHHGWPLSADDWDNQMLFFLSHGYRVIAHDRRGHGRSDQPSTGHDMDTYAADVAALTEALDLRGAVHIGHSTGGGEVARYVARAEPGRVAKAVLVSAVPPVMVKSDTNPDGLPLEVFDEFRAALAANRAQFYIDVPSGPFYGFNREGATVSQGLIDHWWLQGMMGAANAHYECIAAFSETDFTDDLKRIDVPVLVAHGTDDQVVPYADAAPKSAELLANATLKSYEGLPHGMLSTHPEVLNPDLLAFVKS</sequence>
<name>PRXC_STRLI</name>